<reference key="1">
    <citation type="journal article" date="2012" name="PLoS Pathog.">
        <title>Diverse lifestyles and strategies of plant pathogenesis encoded in the genomes of eighteen Dothideomycetes fungi.</title>
        <authorList>
            <person name="Ohm R.A."/>
            <person name="Feau N."/>
            <person name="Henrissat B."/>
            <person name="Schoch C.L."/>
            <person name="Horwitz B.A."/>
            <person name="Barry K.W."/>
            <person name="Condon B.J."/>
            <person name="Copeland A.C."/>
            <person name="Dhillon B."/>
            <person name="Glaser F."/>
            <person name="Hesse C.N."/>
            <person name="Kosti I."/>
            <person name="LaButti K."/>
            <person name="Lindquist E.A."/>
            <person name="Lucas S."/>
            <person name="Salamov A.A."/>
            <person name="Bradshaw R.E."/>
            <person name="Ciuffetti L."/>
            <person name="Hamelin R.C."/>
            <person name="Kema G.H.J."/>
            <person name="Lawrence C."/>
            <person name="Scott J.A."/>
            <person name="Spatafora J.W."/>
            <person name="Turgeon B.G."/>
            <person name="de Wit P.J.G.M."/>
            <person name="Zhong S."/>
            <person name="Goodwin S.B."/>
            <person name="Grigoriev I.V."/>
        </authorList>
    </citation>
    <scope>NUCLEOTIDE SEQUENCE [LARGE SCALE GENOMIC DNA]</scope>
    <source>
        <strain>CIRAD86</strain>
    </source>
</reference>
<reference key="2">
    <citation type="journal article" date="2016" name="PLoS ONE">
        <title>Bioinformatics prediction of polyketide synthase gene clusters from Mycosphaerella fijiensis.</title>
        <authorList>
            <person name="Noar R.D."/>
            <person name="Daub M.E."/>
        </authorList>
    </citation>
    <scope>IDENTIFICATION</scope>
    <scope>FUNCTION</scope>
</reference>
<reference key="3">
    <citation type="journal article" date="2019" name="PLoS ONE">
        <title>A novel polyketide synthase gene cluster in the plant pathogenic fungus Pseudocercospora fijiensis.</title>
        <authorList>
            <person name="Noar R.D."/>
            <person name="Thomas E."/>
            <person name="Daub M.E."/>
        </authorList>
    </citation>
    <scope>FUNCTION</scope>
    <scope>INDUCTION</scope>
    <scope>PATHWAY</scope>
</reference>
<feature type="chain" id="PRO_0000451118" description="Atrochrysone carboxyl ACP thioesterase MYCFIDRAFT_190111">
    <location>
        <begin position="1"/>
        <end position="333"/>
    </location>
</feature>
<feature type="active site" description="Proton donor/acceptor" evidence="2">
    <location>
        <position position="112"/>
    </location>
</feature>
<feature type="binding site" evidence="1">
    <location>
        <position position="108"/>
    </location>
    <ligand>
        <name>Zn(2+)</name>
        <dbReference type="ChEBI" id="CHEBI:29105"/>
        <label>1</label>
        <note>catalytic</note>
    </ligand>
</feature>
<feature type="binding site" evidence="1">
    <location>
        <position position="110"/>
    </location>
    <ligand>
        <name>Zn(2+)</name>
        <dbReference type="ChEBI" id="CHEBI:29105"/>
        <label>1</label>
        <note>catalytic</note>
    </ligand>
</feature>
<feature type="binding site" evidence="1">
    <location>
        <position position="112"/>
    </location>
    <ligand>
        <name>Zn(2+)</name>
        <dbReference type="ChEBI" id="CHEBI:29105"/>
        <label>2</label>
        <note>catalytic</note>
    </ligand>
</feature>
<feature type="binding site" evidence="1">
    <location>
        <position position="113"/>
    </location>
    <ligand>
        <name>Zn(2+)</name>
        <dbReference type="ChEBI" id="CHEBI:29105"/>
        <label>2</label>
        <note>catalytic</note>
    </ligand>
</feature>
<organism>
    <name type="scientific">Pseudocercospora fijiensis (strain CIRAD86)</name>
    <name type="common">Black leaf streak disease fungus</name>
    <name type="synonym">Mycosphaerella fijiensis</name>
    <dbReference type="NCBI Taxonomy" id="383855"/>
    <lineage>
        <taxon>Eukaryota</taxon>
        <taxon>Fungi</taxon>
        <taxon>Dikarya</taxon>
        <taxon>Ascomycota</taxon>
        <taxon>Pezizomycotina</taxon>
        <taxon>Dothideomycetes</taxon>
        <taxon>Dothideomycetidae</taxon>
        <taxon>Mycosphaerellales</taxon>
        <taxon>Mycosphaerellaceae</taxon>
        <taxon>Pseudocercospora</taxon>
    </lineage>
</organism>
<name>PK81A_PSEFD</name>
<sequence length="333" mass="37053">MADQDGDKSGYRQINKALNICAFDDYLKGQRAHLPQIPAVEQLTPRVLRVLGQNAGKFTLQGTNTFIVGKGRDRIIVDTSGGEEEWIELIQETLLDRGINITHVLLTHWHGDHTGGVPDLIRLYPHLKDHIYKNEPERDQQAIQDGQIFAVQGATIRALHAPGHSTDHMCFILEEEHAMFTGDNILGHGTSAVEDLGTFMASLQTMADQNCKTGYSAHGVTIDNLPIKISAELTKLLRREKQVLSALAQFRKRGERCAALRDIVTEIYGQALEEDTRRLALEPFIDEVLRKLAGDGRVAFQKRGGLKKWYSLEMEMAVDAKAAQVAQARAIAV</sequence>
<keyword id="KW-0378">Hydrolase</keyword>
<keyword id="KW-0479">Metal-binding</keyword>
<keyword id="KW-1185">Reference proteome</keyword>
<keyword id="KW-0862">Zinc</keyword>
<comment type="function">
    <text evidence="3 4 7">Atrochrysone carboxyl ACP thioesterase; part of the gene cluster that mediates the biosynthesis of an emodin derivative that may be involved in black Sigatoka disease of banana (PubMed:27388157, PubMed:30735556). The pathway begins with the synthesis of atrochrysone thioester by the polyketide synthase PKS8-1 (Probable). The atrochrysone carboxyl ACP thioesterase MYCFIDRAFT_190111 then breaks the thioester bond and releases the atrochrysone carboxylic acid from PKS8-1 (Probable). The decarboxylase MYCFIDRAFT_34057 then catalyzes the concerted decarboxylation-elimination required to convert atochrysone carboxylic acid into emodin anthrone, which is further oxidized to emodin by the anthrone oxygenase MYCFIDRAFT_34418 (Probable). The functions of the other tailoring enzymes as well as the final product of the cluster have still to be identified (Probable).</text>
</comment>
<comment type="catalytic activity">
    <reaction evidence="7">
        <text>atrochrysone carboxyl-[ACP] + H2O = atrochrysone carboxylate + holo-[ACP] + H(+)</text>
        <dbReference type="Rhea" id="RHEA:64236"/>
        <dbReference type="Rhea" id="RHEA-COMP:9685"/>
        <dbReference type="Rhea" id="RHEA-COMP:16552"/>
        <dbReference type="ChEBI" id="CHEBI:15377"/>
        <dbReference type="ChEBI" id="CHEBI:15378"/>
        <dbReference type="ChEBI" id="CHEBI:64479"/>
        <dbReference type="ChEBI" id="CHEBI:149712"/>
        <dbReference type="ChEBI" id="CHEBI:149713"/>
    </reaction>
    <physiologicalReaction direction="left-to-right" evidence="7">
        <dbReference type="Rhea" id="RHEA:64237"/>
    </physiologicalReaction>
</comment>
<comment type="cofactor">
    <cofactor evidence="1">
        <name>Zn(2+)</name>
        <dbReference type="ChEBI" id="CHEBI:29105"/>
    </cofactor>
    <text evidence="1">Binds 2 Zn(2+) ions per subunit.</text>
</comment>
<comment type="pathway">
    <text evidence="7">Secondary metabolite biosynthesis.</text>
</comment>
<comment type="induction">
    <text evidence="4">Expression is positively regulated by the cluster-specific transcription factor MYCFIDRAFT_198930 and is up-regulated during banana leaves infection.</text>
</comment>
<comment type="similarity">
    <text evidence="6">Belongs to the metallo-beta-lactamase superfamily.</text>
</comment>
<protein>
    <recommendedName>
        <fullName evidence="5">Atrochrysone carboxyl ACP thioesterase MYCFIDRAFT_190111</fullName>
        <ecNumber evidence="7">3.1.2.-</ecNumber>
    </recommendedName>
    <alternativeName>
        <fullName evidence="5">PKS8-1 gene cluster protein MYCFIDRAFT_190111</fullName>
    </alternativeName>
</protein>
<proteinExistence type="evidence at transcript level"/>
<gene>
    <name type="ORF">MYCFIDRAFT_190111</name>
</gene>
<dbReference type="EC" id="3.1.2.-" evidence="7"/>
<dbReference type="EMBL" id="KB446562">
    <property type="protein sequence ID" value="EME79057.1"/>
    <property type="molecule type" value="Genomic_DNA"/>
</dbReference>
<dbReference type="RefSeq" id="XP_007929883.1">
    <property type="nucleotide sequence ID" value="XM_007931692.1"/>
</dbReference>
<dbReference type="SMR" id="M3ANL0"/>
<dbReference type="STRING" id="383855.M3ANL0"/>
<dbReference type="GeneID" id="19335127"/>
<dbReference type="KEGG" id="pfj:MYCFIDRAFT_190111"/>
<dbReference type="VEuPathDB" id="FungiDB:MYCFIDRAFT_190111"/>
<dbReference type="eggNOG" id="KOG0813">
    <property type="taxonomic scope" value="Eukaryota"/>
</dbReference>
<dbReference type="HOGENOM" id="CLU_048478_1_0_1"/>
<dbReference type="OrthoDB" id="17458at2759"/>
<dbReference type="Proteomes" id="UP000016932">
    <property type="component" value="Unassembled WGS sequence"/>
</dbReference>
<dbReference type="GO" id="GO:0016787">
    <property type="term" value="F:hydrolase activity"/>
    <property type="evidence" value="ECO:0007669"/>
    <property type="project" value="UniProtKB-KW"/>
</dbReference>
<dbReference type="GO" id="GO:0046872">
    <property type="term" value="F:metal ion binding"/>
    <property type="evidence" value="ECO:0007669"/>
    <property type="project" value="UniProtKB-KW"/>
</dbReference>
<dbReference type="GO" id="GO:0044550">
    <property type="term" value="P:secondary metabolite biosynthetic process"/>
    <property type="evidence" value="ECO:0007669"/>
    <property type="project" value="TreeGrafter"/>
</dbReference>
<dbReference type="CDD" id="cd07722">
    <property type="entry name" value="LACTB2-like_MBL-fold"/>
    <property type="match status" value="1"/>
</dbReference>
<dbReference type="FunFam" id="3.60.15.10:FF:000041">
    <property type="entry name" value="Metallo-beta-lactamase domain protein"/>
    <property type="match status" value="1"/>
</dbReference>
<dbReference type="Gene3D" id="3.60.15.10">
    <property type="entry name" value="Ribonuclease Z/Hydroxyacylglutathione hydrolase-like"/>
    <property type="match status" value="1"/>
</dbReference>
<dbReference type="Gene3D" id="1.10.10.10">
    <property type="entry name" value="Winged helix-like DNA-binding domain superfamily/Winged helix DNA-binding domain"/>
    <property type="match status" value="1"/>
</dbReference>
<dbReference type="InterPro" id="IPR047921">
    <property type="entry name" value="LACTB2-like_MBL-fold"/>
</dbReference>
<dbReference type="InterPro" id="IPR001279">
    <property type="entry name" value="Metallo-B-lactamas"/>
</dbReference>
<dbReference type="InterPro" id="IPR036866">
    <property type="entry name" value="RibonucZ/Hydroxyglut_hydro"/>
</dbReference>
<dbReference type="InterPro" id="IPR050662">
    <property type="entry name" value="Sec-metab_biosynth-thioest"/>
</dbReference>
<dbReference type="InterPro" id="IPR036388">
    <property type="entry name" value="WH-like_DNA-bd_sf"/>
</dbReference>
<dbReference type="PANTHER" id="PTHR23131:SF3">
    <property type="entry name" value="ATROCHRYSONE CARBOXYL ACP THIOESTERASE"/>
    <property type="match status" value="1"/>
</dbReference>
<dbReference type="PANTHER" id="PTHR23131">
    <property type="entry name" value="ENDORIBONUCLEASE LACTB2"/>
    <property type="match status" value="1"/>
</dbReference>
<dbReference type="Pfam" id="PF00753">
    <property type="entry name" value="Lactamase_B"/>
    <property type="match status" value="1"/>
</dbReference>
<dbReference type="SMART" id="SM00849">
    <property type="entry name" value="Lactamase_B"/>
    <property type="match status" value="1"/>
</dbReference>
<dbReference type="SUPFAM" id="SSF56281">
    <property type="entry name" value="Metallo-hydrolase/oxidoreductase"/>
    <property type="match status" value="1"/>
</dbReference>
<evidence type="ECO:0000250" key="1">
    <source>
        <dbReference type="UniProtKB" id="Q988B9"/>
    </source>
</evidence>
<evidence type="ECO:0000255" key="2"/>
<evidence type="ECO:0000269" key="3">
    <source>
    </source>
</evidence>
<evidence type="ECO:0000269" key="4">
    <source>
    </source>
</evidence>
<evidence type="ECO:0000303" key="5">
    <source>
    </source>
</evidence>
<evidence type="ECO:0000305" key="6"/>
<evidence type="ECO:0000305" key="7">
    <source>
    </source>
</evidence>
<accession>M3ANL0</accession>